<feature type="chain" id="PRO_0000382203" description="Adenylate kinase isoenzyme 5">
    <location>
        <begin position="1"/>
        <end position="562"/>
    </location>
</feature>
<feature type="region of interest" description="Adenylate kinase 1" evidence="2">
    <location>
        <begin position="133"/>
        <end position="316"/>
    </location>
</feature>
<feature type="region of interest" description="NMP 1" evidence="1">
    <location>
        <begin position="162"/>
        <end position="193"/>
    </location>
</feature>
<feature type="region of interest" description="LID 1" evidence="1">
    <location>
        <begin position="256"/>
        <end position="266"/>
    </location>
</feature>
<feature type="region of interest" description="Adenylate kinase 2" evidence="2">
    <location>
        <begin position="377"/>
        <end position="559"/>
    </location>
</feature>
<feature type="region of interest" description="NMP 2" evidence="1">
    <location>
        <begin position="406"/>
        <end position="435"/>
    </location>
</feature>
<feature type="region of interest" description="LID 2" evidence="1">
    <location>
        <begin position="499"/>
        <end position="509"/>
    </location>
</feature>
<feature type="binding site" evidence="1">
    <location>
        <begin position="142"/>
        <end position="147"/>
    </location>
    <ligand>
        <name>ATP</name>
        <dbReference type="ChEBI" id="CHEBI:30616"/>
        <label>1</label>
    </ligand>
</feature>
<feature type="binding site" evidence="1">
    <location>
        <position position="168"/>
    </location>
    <ligand>
        <name>AMP</name>
        <dbReference type="ChEBI" id="CHEBI:456215"/>
        <label>1</label>
    </ligand>
</feature>
<feature type="binding site" evidence="1">
    <location>
        <begin position="191"/>
        <end position="193"/>
    </location>
    <ligand>
        <name>AMP</name>
        <dbReference type="ChEBI" id="CHEBI:456215"/>
        <label>1</label>
    </ligand>
</feature>
<feature type="binding site" evidence="1">
    <location>
        <begin position="219"/>
        <end position="222"/>
    </location>
    <ligand>
        <name>AMP</name>
        <dbReference type="ChEBI" id="CHEBI:456215"/>
        <label>1</label>
    </ligand>
</feature>
<feature type="binding site" evidence="1">
    <location>
        <position position="226"/>
    </location>
    <ligand>
        <name>AMP</name>
        <dbReference type="ChEBI" id="CHEBI:456215"/>
        <label>1</label>
    </ligand>
</feature>
<feature type="binding site" evidence="1">
    <location>
        <position position="257"/>
    </location>
    <ligand>
        <name>ATP</name>
        <dbReference type="ChEBI" id="CHEBI:30616"/>
        <label>1</label>
    </ligand>
</feature>
<feature type="binding site" evidence="1">
    <location>
        <position position="263"/>
    </location>
    <ligand>
        <name>AMP</name>
        <dbReference type="ChEBI" id="CHEBI:456215"/>
        <label>1</label>
    </ligand>
</feature>
<feature type="binding site" evidence="1">
    <location>
        <position position="274"/>
    </location>
    <ligand>
        <name>AMP</name>
        <dbReference type="ChEBI" id="CHEBI:456215"/>
        <label>1</label>
    </ligand>
</feature>
<feature type="binding site" evidence="1">
    <location>
        <begin position="386"/>
        <end position="391"/>
    </location>
    <ligand>
        <name>ATP</name>
        <dbReference type="ChEBI" id="CHEBI:30616"/>
        <label>2</label>
    </ligand>
</feature>
<feature type="binding site" evidence="1">
    <location>
        <position position="407"/>
    </location>
    <ligand>
        <name>AMP</name>
        <dbReference type="ChEBI" id="CHEBI:456215"/>
        <label>2</label>
    </ligand>
</feature>
<feature type="binding site" evidence="1">
    <location>
        <begin position="433"/>
        <end position="435"/>
    </location>
    <ligand>
        <name>AMP</name>
        <dbReference type="ChEBI" id="CHEBI:456215"/>
        <label>2</label>
    </ligand>
</feature>
<feature type="binding site" evidence="1">
    <location>
        <begin position="462"/>
        <end position="465"/>
    </location>
    <ligand>
        <name>AMP</name>
        <dbReference type="ChEBI" id="CHEBI:456215"/>
        <label>2</label>
    </ligand>
</feature>
<feature type="binding site" evidence="1">
    <location>
        <position position="469"/>
    </location>
    <ligand>
        <name>AMP</name>
        <dbReference type="ChEBI" id="CHEBI:456215"/>
        <label>2</label>
    </ligand>
</feature>
<feature type="binding site" evidence="1">
    <location>
        <position position="500"/>
    </location>
    <ligand>
        <name>ATP</name>
        <dbReference type="ChEBI" id="CHEBI:30616"/>
        <label>2</label>
    </ligand>
</feature>
<feature type="binding site" evidence="1">
    <location>
        <position position="517"/>
    </location>
    <ligand>
        <name>AMP</name>
        <dbReference type="ChEBI" id="CHEBI:456215"/>
        <label>2</label>
    </ligand>
</feature>
<feature type="binding site" evidence="1">
    <location>
        <position position="545"/>
    </location>
    <ligand>
        <name>ATP</name>
        <dbReference type="ChEBI" id="CHEBI:30616"/>
        <label>2</label>
    </ligand>
</feature>
<reference key="1">
    <citation type="journal article" date="2009" name="Science">
        <title>The genome sequence of taurine cattle: a window to ruminant biology and evolution.</title>
        <authorList>
            <consortium name="The bovine genome sequencing and analysis consortium"/>
        </authorList>
    </citation>
    <scope>NUCLEOTIDE SEQUENCE [LARGE SCALE GENOMIC DNA]</scope>
    <source>
        <strain>Hereford</strain>
        <tissue>Hippocampus</tissue>
    </source>
</reference>
<name>KAD5_BOVIN</name>
<comment type="function">
    <text evidence="2">Nucleoside monophosphate (NMP) kinase that catalyzes the reversible transfer of the terminal phosphate group between nucleoside triphosphates and monophosphates. Active on AMP and dAMP with ATP as a donor. When GTP is used as phosphate donor, the enzyme phosphorylates AMP, CMP, and to a small extent dCMP. Also displays broad nucleoside diphosphate kinase activity.</text>
</comment>
<comment type="catalytic activity">
    <reaction evidence="2">
        <text>AMP + ATP = 2 ADP</text>
        <dbReference type="Rhea" id="RHEA:12973"/>
        <dbReference type="ChEBI" id="CHEBI:30616"/>
        <dbReference type="ChEBI" id="CHEBI:456215"/>
        <dbReference type="ChEBI" id="CHEBI:456216"/>
        <dbReference type="EC" id="2.7.4.3"/>
    </reaction>
</comment>
<comment type="catalytic activity">
    <reaction evidence="2">
        <text>a 2'-deoxyribonucleoside 5'-diphosphate + ATP = a 2'-deoxyribonucleoside 5'-triphosphate + ADP</text>
        <dbReference type="Rhea" id="RHEA:44640"/>
        <dbReference type="ChEBI" id="CHEBI:30616"/>
        <dbReference type="ChEBI" id="CHEBI:61560"/>
        <dbReference type="ChEBI" id="CHEBI:73316"/>
        <dbReference type="ChEBI" id="CHEBI:456216"/>
        <dbReference type="EC" id="2.7.4.6"/>
    </reaction>
</comment>
<comment type="catalytic activity">
    <reaction evidence="2">
        <text>a ribonucleoside 5'-diphosphate + ATP = a ribonucleoside 5'-triphosphate + ADP</text>
        <dbReference type="Rhea" id="RHEA:18113"/>
        <dbReference type="ChEBI" id="CHEBI:30616"/>
        <dbReference type="ChEBI" id="CHEBI:57930"/>
        <dbReference type="ChEBI" id="CHEBI:61557"/>
        <dbReference type="ChEBI" id="CHEBI:456216"/>
        <dbReference type="EC" id="2.7.4.6"/>
    </reaction>
</comment>
<comment type="subunit">
    <text evidence="1">Monomer.</text>
</comment>
<comment type="subcellular location">
    <subcellularLocation>
        <location evidence="2">Cytoplasm</location>
    </subcellularLocation>
</comment>
<comment type="similarity">
    <text evidence="3">Belongs to the adenylate kinase family.</text>
</comment>
<accession>A4IFD0</accession>
<keyword id="KW-0067">ATP-binding</keyword>
<keyword id="KW-0963">Cytoplasm</keyword>
<keyword id="KW-0418">Kinase</keyword>
<keyword id="KW-0547">Nucleotide-binding</keyword>
<keyword id="KW-1185">Reference proteome</keyword>
<keyword id="KW-0808">Transferase</keyword>
<gene>
    <name type="primary">Ak5</name>
</gene>
<organism>
    <name type="scientific">Bos taurus</name>
    <name type="common">Bovine</name>
    <dbReference type="NCBI Taxonomy" id="9913"/>
    <lineage>
        <taxon>Eukaryota</taxon>
        <taxon>Metazoa</taxon>
        <taxon>Chordata</taxon>
        <taxon>Craniata</taxon>
        <taxon>Vertebrata</taxon>
        <taxon>Euteleostomi</taxon>
        <taxon>Mammalia</taxon>
        <taxon>Eutheria</taxon>
        <taxon>Laurasiatheria</taxon>
        <taxon>Artiodactyla</taxon>
        <taxon>Ruminantia</taxon>
        <taxon>Pecora</taxon>
        <taxon>Bovidae</taxon>
        <taxon>Bovinae</taxon>
        <taxon>Bos</taxon>
    </lineage>
</organism>
<dbReference type="EC" id="2.7.4.3"/>
<dbReference type="EC" id="2.7.4.6"/>
<dbReference type="EMBL" id="BC134521">
    <property type="protein sequence ID" value="AAI34522.1"/>
    <property type="molecule type" value="mRNA"/>
</dbReference>
<dbReference type="RefSeq" id="NP_001077226.1">
    <property type="nucleotide sequence ID" value="NM_001083757.1"/>
</dbReference>
<dbReference type="SMR" id="A4IFD0"/>
<dbReference type="FunCoup" id="A4IFD0">
    <property type="interactions" value="1105"/>
</dbReference>
<dbReference type="STRING" id="9913.ENSBTAP00000069785"/>
<dbReference type="PaxDb" id="9913-ENSBTAP00000023151"/>
<dbReference type="GeneID" id="613448"/>
<dbReference type="KEGG" id="bta:613448"/>
<dbReference type="CTD" id="26289"/>
<dbReference type="eggNOG" id="KOG3079">
    <property type="taxonomic scope" value="Eukaryota"/>
</dbReference>
<dbReference type="HOGENOM" id="CLU_034712_1_0_1"/>
<dbReference type="InParanoid" id="A4IFD0"/>
<dbReference type="OrthoDB" id="6436361at2759"/>
<dbReference type="TreeFam" id="TF313747"/>
<dbReference type="Proteomes" id="UP000009136">
    <property type="component" value="Unplaced"/>
</dbReference>
<dbReference type="GO" id="GO:0005737">
    <property type="term" value="C:cytoplasm"/>
    <property type="evidence" value="ECO:0000318"/>
    <property type="project" value="GO_Central"/>
</dbReference>
<dbReference type="GO" id="GO:0005829">
    <property type="term" value="C:cytosol"/>
    <property type="evidence" value="ECO:0000318"/>
    <property type="project" value="GO_Central"/>
</dbReference>
<dbReference type="GO" id="GO:0004017">
    <property type="term" value="F:adenylate kinase activity"/>
    <property type="evidence" value="ECO:0007669"/>
    <property type="project" value="UniProtKB-EC"/>
</dbReference>
<dbReference type="GO" id="GO:0005524">
    <property type="term" value="F:ATP binding"/>
    <property type="evidence" value="ECO:0007669"/>
    <property type="project" value="UniProtKB-KW"/>
</dbReference>
<dbReference type="GO" id="GO:0004550">
    <property type="term" value="F:nucleoside diphosphate kinase activity"/>
    <property type="evidence" value="ECO:0000250"/>
    <property type="project" value="UniProtKB"/>
</dbReference>
<dbReference type="GO" id="GO:0046034">
    <property type="term" value="P:ATP metabolic process"/>
    <property type="evidence" value="ECO:0007669"/>
    <property type="project" value="InterPro"/>
</dbReference>
<dbReference type="CDD" id="cd01428">
    <property type="entry name" value="ADK"/>
    <property type="match status" value="2"/>
</dbReference>
<dbReference type="CDD" id="cd22978">
    <property type="entry name" value="DD_AK5"/>
    <property type="match status" value="1"/>
</dbReference>
<dbReference type="FunFam" id="3.40.50.300:FF:000583">
    <property type="entry name" value="Adenylate kinase isoenzyme 5"/>
    <property type="match status" value="1"/>
</dbReference>
<dbReference type="FunFam" id="3.40.50.300:FF:001176">
    <property type="entry name" value="Adenylate kinase isoenzyme 5"/>
    <property type="match status" value="1"/>
</dbReference>
<dbReference type="Gene3D" id="3.40.50.300">
    <property type="entry name" value="P-loop containing nucleotide triphosphate hydrolases"/>
    <property type="match status" value="2"/>
</dbReference>
<dbReference type="HAMAP" id="MF_00235">
    <property type="entry name" value="Adenylate_kinase_Adk"/>
    <property type="match status" value="2"/>
</dbReference>
<dbReference type="InterPro" id="IPR000850">
    <property type="entry name" value="Adenylat/UMP-CMP_kin"/>
</dbReference>
<dbReference type="InterPro" id="IPR033690">
    <property type="entry name" value="Adenylat_kinase_CS"/>
</dbReference>
<dbReference type="InterPro" id="IPR006267">
    <property type="entry name" value="AK1/5"/>
</dbReference>
<dbReference type="InterPro" id="IPR027417">
    <property type="entry name" value="P-loop_NTPase"/>
</dbReference>
<dbReference type="NCBIfam" id="TIGR01360">
    <property type="entry name" value="aden_kin_iso1"/>
    <property type="match status" value="1"/>
</dbReference>
<dbReference type="PANTHER" id="PTHR23359">
    <property type="entry name" value="NUCLEOTIDE KINASE"/>
    <property type="match status" value="1"/>
</dbReference>
<dbReference type="Pfam" id="PF00406">
    <property type="entry name" value="ADK"/>
    <property type="match status" value="2"/>
</dbReference>
<dbReference type="PRINTS" id="PR00094">
    <property type="entry name" value="ADENYLTKNASE"/>
</dbReference>
<dbReference type="SUPFAM" id="SSF47391">
    <property type="entry name" value="Dimerization-anchoring domain of cAMP-dependent PK regulatory subunit"/>
    <property type="match status" value="1"/>
</dbReference>
<dbReference type="SUPFAM" id="SSF52540">
    <property type="entry name" value="P-loop containing nucleoside triphosphate hydrolases"/>
    <property type="match status" value="2"/>
</dbReference>
<dbReference type="PROSITE" id="PS00113">
    <property type="entry name" value="ADENYLATE_KINASE"/>
    <property type="match status" value="2"/>
</dbReference>
<evidence type="ECO:0000250" key="1">
    <source>
        <dbReference type="UniProtKB" id="P00568"/>
    </source>
</evidence>
<evidence type="ECO:0000250" key="2">
    <source>
        <dbReference type="UniProtKB" id="Q9Y6K8"/>
    </source>
</evidence>
<evidence type="ECO:0000305" key="3"/>
<sequence>MNTNEAKEYLARREIPQLFESLLNGLMCSKPEDPVEYLESCLQKVKELGGCDKVKWDTFVSQEKKTLPPLNGGQSRRSFLRNVMPENSNFPYRRYDRLPPIHQFSIESDTDLSETAELIEEYEVFDPTRPRPKIILVIGGPGSGKGTQSLKIAERYGFQYISVGELLRKKIHSTSSNRKWSLIAKIITTGELAPQETTITEIKQKLMQMPDEVGIVIDGFPRDVAQALSFEDQICTPDLVVFLACTNQRLKERLLKRAEQQGRPDDNLKATQRRLMNFKQNAAPLVKYFQEKGLIMTFDADRDEDEVFYDISMAVDSKLFPNKEAAAGSSDLDPSMMLDTGEVIDTGSDYEDQGDDQLNVFGEDTMGGFMEDLKKCKIIFMIGGPGSGKGTQCGKLAEKYGFTHLSTDELLQNELSSESGRSKLIRDIMERGELVPSGIILELLKEAMVASLSNTKGFLIDGYPREVKQGEEFGRRIGDPHLVICMDCSADTMTNRLLQRSRNSPQADDNTTTIAKRLETYYRASIPVVAYYETKTQLHKINAEGTPEEVFLQLCTAIDSIF</sequence>
<proteinExistence type="evidence at transcript level"/>
<protein>
    <recommendedName>
        <fullName>Adenylate kinase isoenzyme 5</fullName>
        <shortName>AK 5</shortName>
        <ecNumber>2.7.4.3</ecNumber>
        <ecNumber>2.7.4.6</ecNumber>
    </recommendedName>
    <alternativeName>
        <fullName>ATP-AMP transphosphorylase 5</fullName>
    </alternativeName>
</protein>